<keyword id="KW-0131">Cell cycle</keyword>
<keyword id="KW-0132">Cell division</keyword>
<keyword id="KW-0133">Cell shape</keyword>
<keyword id="KW-0961">Cell wall biogenesis/degradation</keyword>
<keyword id="KW-0963">Cytoplasm</keyword>
<keyword id="KW-0326">Glycosidase</keyword>
<keyword id="KW-0378">Hydrolase</keyword>
<keyword id="KW-0573">Peptidoglycan synthesis</keyword>
<dbReference type="EC" id="3.2.1.52" evidence="1"/>
<dbReference type="EMBL" id="CP000109">
    <property type="protein sequence ID" value="ABB41891.1"/>
    <property type="molecule type" value="Genomic_DNA"/>
</dbReference>
<dbReference type="SMR" id="Q31G32"/>
<dbReference type="STRING" id="317025.Tcr_1296"/>
<dbReference type="CAZy" id="GH3">
    <property type="family name" value="Glycoside Hydrolase Family 3"/>
</dbReference>
<dbReference type="KEGG" id="tcx:Tcr_1296"/>
<dbReference type="eggNOG" id="COG1472">
    <property type="taxonomic scope" value="Bacteria"/>
</dbReference>
<dbReference type="HOGENOM" id="CLU_008392_0_0_6"/>
<dbReference type="OrthoDB" id="9786661at2"/>
<dbReference type="UniPathway" id="UPA00544"/>
<dbReference type="GO" id="GO:0005737">
    <property type="term" value="C:cytoplasm"/>
    <property type="evidence" value="ECO:0007669"/>
    <property type="project" value="UniProtKB-SubCell"/>
</dbReference>
<dbReference type="GO" id="GO:0004563">
    <property type="term" value="F:beta-N-acetylhexosaminidase activity"/>
    <property type="evidence" value="ECO:0007669"/>
    <property type="project" value="UniProtKB-UniRule"/>
</dbReference>
<dbReference type="GO" id="GO:0005975">
    <property type="term" value="P:carbohydrate metabolic process"/>
    <property type="evidence" value="ECO:0007669"/>
    <property type="project" value="InterPro"/>
</dbReference>
<dbReference type="GO" id="GO:0051301">
    <property type="term" value="P:cell division"/>
    <property type="evidence" value="ECO:0007669"/>
    <property type="project" value="UniProtKB-KW"/>
</dbReference>
<dbReference type="GO" id="GO:0071555">
    <property type="term" value="P:cell wall organization"/>
    <property type="evidence" value="ECO:0007669"/>
    <property type="project" value="UniProtKB-KW"/>
</dbReference>
<dbReference type="GO" id="GO:0009252">
    <property type="term" value="P:peptidoglycan biosynthetic process"/>
    <property type="evidence" value="ECO:0007669"/>
    <property type="project" value="UniProtKB-KW"/>
</dbReference>
<dbReference type="GO" id="GO:0009254">
    <property type="term" value="P:peptidoglycan turnover"/>
    <property type="evidence" value="ECO:0007669"/>
    <property type="project" value="UniProtKB-UniRule"/>
</dbReference>
<dbReference type="GO" id="GO:0008360">
    <property type="term" value="P:regulation of cell shape"/>
    <property type="evidence" value="ECO:0007669"/>
    <property type="project" value="UniProtKB-KW"/>
</dbReference>
<dbReference type="Gene3D" id="3.20.20.300">
    <property type="entry name" value="Glycoside hydrolase, family 3, N-terminal domain"/>
    <property type="match status" value="1"/>
</dbReference>
<dbReference type="HAMAP" id="MF_00364">
    <property type="entry name" value="NagZ"/>
    <property type="match status" value="1"/>
</dbReference>
<dbReference type="InterPro" id="IPR022956">
    <property type="entry name" value="Beta_hexosaminidase_bac"/>
</dbReference>
<dbReference type="InterPro" id="IPR001764">
    <property type="entry name" value="Glyco_hydro_3_N"/>
</dbReference>
<dbReference type="InterPro" id="IPR036962">
    <property type="entry name" value="Glyco_hydro_3_N_sf"/>
</dbReference>
<dbReference type="InterPro" id="IPR017853">
    <property type="entry name" value="Glycoside_hydrolase_SF"/>
</dbReference>
<dbReference type="InterPro" id="IPR050226">
    <property type="entry name" value="NagZ_Beta-hexosaminidase"/>
</dbReference>
<dbReference type="NCBIfam" id="NF003740">
    <property type="entry name" value="PRK05337.1"/>
    <property type="match status" value="1"/>
</dbReference>
<dbReference type="PANTHER" id="PTHR30480:SF13">
    <property type="entry name" value="BETA-HEXOSAMINIDASE"/>
    <property type="match status" value="1"/>
</dbReference>
<dbReference type="PANTHER" id="PTHR30480">
    <property type="entry name" value="BETA-HEXOSAMINIDASE-RELATED"/>
    <property type="match status" value="1"/>
</dbReference>
<dbReference type="Pfam" id="PF00933">
    <property type="entry name" value="Glyco_hydro_3"/>
    <property type="match status" value="1"/>
</dbReference>
<dbReference type="SUPFAM" id="SSF51445">
    <property type="entry name" value="(Trans)glycosidases"/>
    <property type="match status" value="1"/>
</dbReference>
<reference key="1">
    <citation type="journal article" date="2006" name="PLoS Biol.">
        <title>The genome of deep-sea vent chemolithoautotroph Thiomicrospira crunogena XCL-2.</title>
        <authorList>
            <person name="Scott K.M."/>
            <person name="Sievert S.M."/>
            <person name="Abril F.N."/>
            <person name="Ball L.A."/>
            <person name="Barrett C.J."/>
            <person name="Blake R.A."/>
            <person name="Boller A.J."/>
            <person name="Chain P.S.G."/>
            <person name="Clark J.A."/>
            <person name="Davis C.R."/>
            <person name="Detter C."/>
            <person name="Do K.F."/>
            <person name="Dobrinski K.P."/>
            <person name="Faza B.I."/>
            <person name="Fitzpatrick K.A."/>
            <person name="Freyermuth S.K."/>
            <person name="Harmer T.L."/>
            <person name="Hauser L.J."/>
            <person name="Huegler M."/>
            <person name="Kerfeld C.A."/>
            <person name="Klotz M.G."/>
            <person name="Kong W.W."/>
            <person name="Land M."/>
            <person name="Lapidus A."/>
            <person name="Larimer F.W."/>
            <person name="Longo D.L."/>
            <person name="Lucas S."/>
            <person name="Malfatti S.A."/>
            <person name="Massey S.E."/>
            <person name="Martin D.D."/>
            <person name="McCuddin Z."/>
            <person name="Meyer F."/>
            <person name="Moore J.L."/>
            <person name="Ocampo L.H. Jr."/>
            <person name="Paul J.H."/>
            <person name="Paulsen I.T."/>
            <person name="Reep D.K."/>
            <person name="Ren Q."/>
            <person name="Ross R.L."/>
            <person name="Sato P.Y."/>
            <person name="Thomas P."/>
            <person name="Tinkham L.E."/>
            <person name="Zeruth G.T."/>
        </authorList>
    </citation>
    <scope>NUCLEOTIDE SEQUENCE [LARGE SCALE GENOMIC DNA]</scope>
    <source>
        <strain>DSM 25203 / XCL-2</strain>
    </source>
</reference>
<accession>Q31G32</accession>
<sequence>MEKLLGQAMPLGCIMVDLESTTLQPHEKERLLDPLVAGVILFSRNYESIEQLQALTTEIHQLRHPKLLIAVDHEGGRVQRFKEGFSMLPAMGQLGKCFRANEKEGLELAQQVGWLMATELLAVGVDFSFAPVVDLDYGDSRVIGDRAFDSDPVIVGKLGKALVQGMRDAGMASVAKHFPGHGYIQADTHLEVAVDHREFQEIAHKDIQPFLKLIENGLDAVMPAHVRYPKVDDLPAGFSKVWLQEVLRQQCYFDGAIISDDMSMHAATEFGDAPTRVTAALKAGCDLVLVCNDPVAADEVLSQVTWETGPLSHARLIRLHGKGHLKLSQLHNNPLWQSRASHVSHFLNSVNQQGLLV</sequence>
<feature type="chain" id="PRO_0000234927" description="Beta-hexosaminidase">
    <location>
        <begin position="1"/>
        <end position="357"/>
    </location>
</feature>
<feature type="active site" description="Proton donor/acceptor" evidence="1">
    <location>
        <position position="189"/>
    </location>
</feature>
<feature type="active site" description="Nucleophile" evidence="1">
    <location>
        <position position="260"/>
    </location>
</feature>
<feature type="binding site" evidence="1">
    <location>
        <position position="72"/>
    </location>
    <ligand>
        <name>substrate</name>
    </ligand>
</feature>
<feature type="binding site" evidence="1">
    <location>
        <position position="80"/>
    </location>
    <ligand>
        <name>substrate</name>
    </ligand>
</feature>
<feature type="binding site" evidence="1">
    <location>
        <position position="146"/>
    </location>
    <ligand>
        <name>substrate</name>
    </ligand>
</feature>
<feature type="binding site" evidence="1">
    <location>
        <begin position="176"/>
        <end position="177"/>
    </location>
    <ligand>
        <name>substrate</name>
    </ligand>
</feature>
<feature type="site" description="Important for catalytic activity" evidence="1">
    <location>
        <position position="187"/>
    </location>
</feature>
<proteinExistence type="inferred from homology"/>
<evidence type="ECO:0000255" key="1">
    <source>
        <dbReference type="HAMAP-Rule" id="MF_00364"/>
    </source>
</evidence>
<name>NAGZ_HYDCU</name>
<gene>
    <name evidence="1" type="primary">nagZ</name>
    <name type="ordered locus">Tcr_1296</name>
</gene>
<organism>
    <name type="scientific">Hydrogenovibrio crunogenus (strain DSM 25203 / XCL-2)</name>
    <name type="common">Thiomicrospira crunogena</name>
    <dbReference type="NCBI Taxonomy" id="317025"/>
    <lineage>
        <taxon>Bacteria</taxon>
        <taxon>Pseudomonadati</taxon>
        <taxon>Pseudomonadota</taxon>
        <taxon>Gammaproteobacteria</taxon>
        <taxon>Thiotrichales</taxon>
        <taxon>Piscirickettsiaceae</taxon>
        <taxon>Hydrogenovibrio</taxon>
    </lineage>
</organism>
<comment type="function">
    <text evidence="1">Plays a role in peptidoglycan recycling by cleaving the terminal beta-1,4-linked N-acetylglucosamine (GlcNAc) from peptide-linked peptidoglycan fragments, giving rise to free GlcNAc, anhydro-N-acetylmuramic acid and anhydro-N-acetylmuramic acid-linked peptides.</text>
</comment>
<comment type="catalytic activity">
    <reaction evidence="1">
        <text>Hydrolysis of terminal non-reducing N-acetyl-D-hexosamine residues in N-acetyl-beta-D-hexosaminides.</text>
        <dbReference type="EC" id="3.2.1.52"/>
    </reaction>
</comment>
<comment type="pathway">
    <text evidence="1">Cell wall biogenesis; peptidoglycan recycling.</text>
</comment>
<comment type="subcellular location">
    <subcellularLocation>
        <location evidence="1">Cytoplasm</location>
    </subcellularLocation>
</comment>
<comment type="similarity">
    <text evidence="1">Belongs to the glycosyl hydrolase 3 family. NagZ subfamily.</text>
</comment>
<protein>
    <recommendedName>
        <fullName evidence="1">Beta-hexosaminidase</fullName>
        <ecNumber evidence="1">3.2.1.52</ecNumber>
    </recommendedName>
    <alternativeName>
        <fullName evidence="1">Beta-N-acetylhexosaminidase</fullName>
    </alternativeName>
    <alternativeName>
        <fullName evidence="1">N-acetyl-beta-glucosaminidase</fullName>
    </alternativeName>
</protein>